<name>GRC15_ORYSJ</name>
<reference key="1">
    <citation type="journal article" date="2005" name="BMC Biol.">
        <title>The sequence of rice chromosomes 11 and 12, rich in disease resistance genes and recent gene duplications.</title>
        <authorList>
            <consortium name="The rice chromosomes 11 and 12 sequencing consortia"/>
        </authorList>
    </citation>
    <scope>NUCLEOTIDE SEQUENCE [LARGE SCALE GENOMIC DNA]</scope>
    <source>
        <strain>cv. Nipponbare</strain>
    </source>
</reference>
<reference key="2">
    <citation type="journal article" date="2005" name="Nature">
        <title>The map-based sequence of the rice genome.</title>
        <authorList>
            <consortium name="International rice genome sequencing project (IRGSP)"/>
        </authorList>
    </citation>
    <scope>NUCLEOTIDE SEQUENCE [LARGE SCALE GENOMIC DNA]</scope>
    <source>
        <strain>cv. Nipponbare</strain>
    </source>
</reference>
<reference key="3">
    <citation type="journal article" date="2008" name="Nucleic Acids Res.">
        <title>The rice annotation project database (RAP-DB): 2008 update.</title>
        <authorList>
            <consortium name="The rice annotation project (RAP)"/>
        </authorList>
    </citation>
    <scope>GENOME REANNOTATION</scope>
    <source>
        <strain>cv. Nipponbare</strain>
    </source>
</reference>
<reference key="4">
    <citation type="journal article" date="2013" name="Rice">
        <title>Improvement of the Oryza sativa Nipponbare reference genome using next generation sequence and optical map data.</title>
        <authorList>
            <person name="Kawahara Y."/>
            <person name="de la Bastide M."/>
            <person name="Hamilton J.P."/>
            <person name="Kanamori H."/>
            <person name="McCombie W.R."/>
            <person name="Ouyang S."/>
            <person name="Schwartz D.C."/>
            <person name="Tanaka T."/>
            <person name="Wu J."/>
            <person name="Zhou S."/>
            <person name="Childs K.L."/>
            <person name="Davidson R.M."/>
            <person name="Lin H."/>
            <person name="Quesada-Ocampo L."/>
            <person name="Vaillancourt B."/>
            <person name="Sakai H."/>
            <person name="Lee S.S."/>
            <person name="Kim J."/>
            <person name="Numa H."/>
            <person name="Itoh T."/>
            <person name="Buell C.R."/>
            <person name="Matsumoto T."/>
        </authorList>
    </citation>
    <scope>GENOME REANNOTATION</scope>
    <source>
        <strain>cv. Nipponbare</strain>
    </source>
</reference>
<reference key="5">
    <citation type="journal article" date="2005" name="PLoS Biol.">
        <title>The genomes of Oryza sativa: a history of duplications.</title>
        <authorList>
            <person name="Yu J."/>
            <person name="Wang J."/>
            <person name="Lin W."/>
            <person name="Li S."/>
            <person name="Li H."/>
            <person name="Zhou J."/>
            <person name="Ni P."/>
            <person name="Dong W."/>
            <person name="Hu S."/>
            <person name="Zeng C."/>
            <person name="Zhang J."/>
            <person name="Zhang Y."/>
            <person name="Li R."/>
            <person name="Xu Z."/>
            <person name="Li S."/>
            <person name="Li X."/>
            <person name="Zheng H."/>
            <person name="Cong L."/>
            <person name="Lin L."/>
            <person name="Yin J."/>
            <person name="Geng J."/>
            <person name="Li G."/>
            <person name="Shi J."/>
            <person name="Liu J."/>
            <person name="Lv H."/>
            <person name="Li J."/>
            <person name="Wang J."/>
            <person name="Deng Y."/>
            <person name="Ran L."/>
            <person name="Shi X."/>
            <person name="Wang X."/>
            <person name="Wu Q."/>
            <person name="Li C."/>
            <person name="Ren X."/>
            <person name="Wang J."/>
            <person name="Wang X."/>
            <person name="Li D."/>
            <person name="Liu D."/>
            <person name="Zhang X."/>
            <person name="Ji Z."/>
            <person name="Zhao W."/>
            <person name="Sun Y."/>
            <person name="Zhang Z."/>
            <person name="Bao J."/>
            <person name="Han Y."/>
            <person name="Dong L."/>
            <person name="Ji J."/>
            <person name="Chen P."/>
            <person name="Wu S."/>
            <person name="Liu J."/>
            <person name="Xiao Y."/>
            <person name="Bu D."/>
            <person name="Tan J."/>
            <person name="Yang L."/>
            <person name="Ye C."/>
            <person name="Zhang J."/>
            <person name="Xu J."/>
            <person name="Zhou Y."/>
            <person name="Yu Y."/>
            <person name="Zhang B."/>
            <person name="Zhuang S."/>
            <person name="Wei H."/>
            <person name="Liu B."/>
            <person name="Lei M."/>
            <person name="Yu H."/>
            <person name="Li Y."/>
            <person name="Xu H."/>
            <person name="Wei S."/>
            <person name="He X."/>
            <person name="Fang L."/>
            <person name="Zhang Z."/>
            <person name="Zhang Y."/>
            <person name="Huang X."/>
            <person name="Su Z."/>
            <person name="Tong W."/>
            <person name="Li J."/>
            <person name="Tong Z."/>
            <person name="Li S."/>
            <person name="Ye J."/>
            <person name="Wang L."/>
            <person name="Fang L."/>
            <person name="Lei T."/>
            <person name="Chen C.-S."/>
            <person name="Chen H.-C."/>
            <person name="Xu Z."/>
            <person name="Li H."/>
            <person name="Huang H."/>
            <person name="Zhang F."/>
            <person name="Xu H."/>
            <person name="Li N."/>
            <person name="Zhao C."/>
            <person name="Li S."/>
            <person name="Dong L."/>
            <person name="Huang Y."/>
            <person name="Li L."/>
            <person name="Xi Y."/>
            <person name="Qi Q."/>
            <person name="Li W."/>
            <person name="Zhang B."/>
            <person name="Hu W."/>
            <person name="Zhang Y."/>
            <person name="Tian X."/>
            <person name="Jiao Y."/>
            <person name="Liang X."/>
            <person name="Jin J."/>
            <person name="Gao L."/>
            <person name="Zheng W."/>
            <person name="Hao B."/>
            <person name="Liu S.-M."/>
            <person name="Wang W."/>
            <person name="Yuan L."/>
            <person name="Cao M."/>
            <person name="McDermott J."/>
            <person name="Samudrala R."/>
            <person name="Wang J."/>
            <person name="Wong G.K.-S."/>
            <person name="Yang H."/>
        </authorList>
    </citation>
    <scope>NUCLEOTIDE SEQUENCE [LARGE SCALE GENOMIC DNA]</scope>
    <source>
        <strain>cv. Nipponbare</strain>
    </source>
</reference>
<reference key="6">
    <citation type="journal article" date="2003" name="Science">
        <title>Collection, mapping, and annotation of over 28,000 cDNA clones from japonica rice.</title>
        <authorList>
            <consortium name="The rice full-length cDNA consortium"/>
        </authorList>
    </citation>
    <scope>NUCLEOTIDE SEQUENCE [LARGE SCALE MRNA]</scope>
    <source>
        <strain>cv. Nipponbare</strain>
    </source>
</reference>
<reference key="7">
    <citation type="journal article" date="2006" name="J. Exp. Bot.">
        <title>Genome-wide analysis of plant glutaredoxin systems.</title>
        <authorList>
            <person name="Rouhier N."/>
            <person name="Couturier J."/>
            <person name="Jacquot J.-P."/>
        </authorList>
    </citation>
    <scope>GENE FAMILY</scope>
</reference>
<feature type="chain" id="PRO_0000269676" description="Glutaredoxin-C15">
    <location>
        <begin position="1"/>
        <end position="104"/>
    </location>
</feature>
<feature type="domain" description="Glutaredoxin" evidence="2">
    <location>
        <begin position="1"/>
        <end position="103"/>
    </location>
</feature>
<feature type="disulfide bond" description="Redox-active" evidence="1">
    <location>
        <begin position="21"/>
        <end position="24"/>
    </location>
</feature>
<proteinExistence type="inferred from homology"/>
<evidence type="ECO:0000250" key="1"/>
<evidence type="ECO:0000255" key="2">
    <source>
        <dbReference type="PROSITE-ProRule" id="PRU00686"/>
    </source>
</evidence>
<evidence type="ECO:0000305" key="3"/>
<evidence type="ECO:0000312" key="4">
    <source>
        <dbReference type="EMBL" id="EAZ20752.1"/>
    </source>
</evidence>
<sequence length="104" mass="11174">MERVAKLSTEKAVVIFTASNCPMCHTVVSLFSDLGVGAAVHELDRDPLHGRDMERDLARRLGRSPPVPAVFIAGKLVGSTDRVMSLHLAGKLVPMLKAAGAIWL</sequence>
<organism>
    <name type="scientific">Oryza sativa subsp. japonica</name>
    <name type="common">Rice</name>
    <dbReference type="NCBI Taxonomy" id="39947"/>
    <lineage>
        <taxon>Eukaryota</taxon>
        <taxon>Viridiplantae</taxon>
        <taxon>Streptophyta</taxon>
        <taxon>Embryophyta</taxon>
        <taxon>Tracheophyta</taxon>
        <taxon>Spermatophyta</taxon>
        <taxon>Magnoliopsida</taxon>
        <taxon>Liliopsida</taxon>
        <taxon>Poales</taxon>
        <taxon>Poaceae</taxon>
        <taxon>BOP clade</taxon>
        <taxon>Oryzoideae</taxon>
        <taxon>Oryzeae</taxon>
        <taxon>Oryzinae</taxon>
        <taxon>Oryza</taxon>
        <taxon>Oryza sativa</taxon>
    </lineage>
</organism>
<dbReference type="EMBL" id="DP000011">
    <property type="protein sequence ID" value="ABA99337.1"/>
    <property type="molecule type" value="Genomic_DNA"/>
</dbReference>
<dbReference type="EMBL" id="AP008218">
    <property type="protein sequence ID" value="BAF29962.1"/>
    <property type="molecule type" value="Genomic_DNA"/>
</dbReference>
<dbReference type="EMBL" id="AP014968">
    <property type="protein sequence ID" value="BAT17478.1"/>
    <property type="molecule type" value="Genomic_DNA"/>
</dbReference>
<dbReference type="EMBL" id="CM000149">
    <property type="protein sequence ID" value="EAZ20752.1"/>
    <property type="molecule type" value="Genomic_DNA"/>
</dbReference>
<dbReference type="EMBL" id="AK063610">
    <property type="protein sequence ID" value="BAG88791.1"/>
    <property type="molecule type" value="mRNA"/>
</dbReference>
<dbReference type="RefSeq" id="XP_015619487.1">
    <property type="nucleotide sequence ID" value="XM_015764001.1"/>
</dbReference>
<dbReference type="SMR" id="Q2QP86"/>
<dbReference type="FunCoup" id="Q2QP86">
    <property type="interactions" value="19"/>
</dbReference>
<dbReference type="STRING" id="39947.Q2QP86"/>
<dbReference type="PaxDb" id="39947-Q2QP86"/>
<dbReference type="EnsemblPlants" id="Os12t0538700-01">
    <property type="protein sequence ID" value="Os12t0538700-01"/>
    <property type="gene ID" value="Os12g0538700"/>
</dbReference>
<dbReference type="Gramene" id="Os12t0538700-01">
    <property type="protein sequence ID" value="Os12t0538700-01"/>
    <property type="gene ID" value="Os12g0538700"/>
</dbReference>
<dbReference type="KEGG" id="dosa:Os12g0538700"/>
<dbReference type="eggNOG" id="KOG1752">
    <property type="taxonomic scope" value="Eukaryota"/>
</dbReference>
<dbReference type="HOGENOM" id="CLU_026126_6_0_1"/>
<dbReference type="InParanoid" id="Q2QP86"/>
<dbReference type="OMA" id="EANAIWF"/>
<dbReference type="OrthoDB" id="418495at2759"/>
<dbReference type="Proteomes" id="UP000000763">
    <property type="component" value="Chromosome 12"/>
</dbReference>
<dbReference type="Proteomes" id="UP000007752">
    <property type="component" value="Chromosome 12"/>
</dbReference>
<dbReference type="Proteomes" id="UP000059680">
    <property type="component" value="Chromosome 12"/>
</dbReference>
<dbReference type="GO" id="GO:0005737">
    <property type="term" value="C:cytoplasm"/>
    <property type="evidence" value="ECO:0007669"/>
    <property type="project" value="UniProtKB-SubCell"/>
</dbReference>
<dbReference type="CDD" id="cd03419">
    <property type="entry name" value="GRX_GRXh_1_2_like"/>
    <property type="match status" value="1"/>
</dbReference>
<dbReference type="Gene3D" id="3.40.30.10">
    <property type="entry name" value="Glutaredoxin"/>
    <property type="match status" value="1"/>
</dbReference>
<dbReference type="InterPro" id="IPR011905">
    <property type="entry name" value="GlrX-like_pln_2"/>
</dbReference>
<dbReference type="InterPro" id="IPR002109">
    <property type="entry name" value="Glutaredoxin"/>
</dbReference>
<dbReference type="InterPro" id="IPR014025">
    <property type="entry name" value="Glutaredoxin_subgr"/>
</dbReference>
<dbReference type="InterPro" id="IPR036249">
    <property type="entry name" value="Thioredoxin-like_sf"/>
</dbReference>
<dbReference type="NCBIfam" id="TIGR02189">
    <property type="entry name" value="GlrX-like_plant"/>
    <property type="match status" value="1"/>
</dbReference>
<dbReference type="PANTHER" id="PTHR10168">
    <property type="entry name" value="GLUTAREDOXIN"/>
    <property type="match status" value="1"/>
</dbReference>
<dbReference type="Pfam" id="PF00462">
    <property type="entry name" value="Glutaredoxin"/>
    <property type="match status" value="1"/>
</dbReference>
<dbReference type="PRINTS" id="PR00160">
    <property type="entry name" value="GLUTAREDOXIN"/>
</dbReference>
<dbReference type="SUPFAM" id="SSF52833">
    <property type="entry name" value="Thioredoxin-like"/>
    <property type="match status" value="1"/>
</dbReference>
<dbReference type="PROSITE" id="PS51354">
    <property type="entry name" value="GLUTAREDOXIN_2"/>
    <property type="match status" value="1"/>
</dbReference>
<accession>Q2QP86</accession>
<accession>A3CI39</accession>
<comment type="function">
    <text evidence="1">Has a glutathione-disulfide oxidoreductase activity in the presence of NADPH and glutathione reductase. Reduces low molecular weight disulfides and proteins (By similarity).</text>
</comment>
<comment type="subcellular location">
    <subcellularLocation>
        <location evidence="1">Cytoplasm</location>
    </subcellularLocation>
</comment>
<comment type="similarity">
    <text evidence="3">Belongs to the glutaredoxin family. CC-type subfamily.</text>
</comment>
<keyword id="KW-0963">Cytoplasm</keyword>
<keyword id="KW-1015">Disulfide bond</keyword>
<keyword id="KW-0249">Electron transport</keyword>
<keyword id="KW-0676">Redox-active center</keyword>
<keyword id="KW-1185">Reference proteome</keyword>
<keyword id="KW-0813">Transport</keyword>
<protein>
    <recommendedName>
        <fullName>Glutaredoxin-C15</fullName>
    </recommendedName>
</protein>
<gene>
    <name type="primary">GRXC15</name>
    <name type="ordered locus">Os12g0538700</name>
    <name type="ordered locus">LOC_Os12g35340</name>
    <name evidence="4" type="ORF">OsJ_36376</name>
</gene>